<dbReference type="EC" id="2.3.1.274" evidence="1"/>
<dbReference type="EMBL" id="CP000469">
    <property type="protein sequence ID" value="ABK48788.1"/>
    <property type="molecule type" value="Genomic_DNA"/>
</dbReference>
<dbReference type="RefSeq" id="WP_011717464.1">
    <property type="nucleotide sequence ID" value="NC_008577.1"/>
</dbReference>
<dbReference type="SMR" id="A0KYB9"/>
<dbReference type="STRING" id="94122.Shewana3_2561"/>
<dbReference type="KEGG" id="shn:Shewana3_2561"/>
<dbReference type="eggNOG" id="COG0416">
    <property type="taxonomic scope" value="Bacteria"/>
</dbReference>
<dbReference type="HOGENOM" id="CLU_039379_1_0_6"/>
<dbReference type="OrthoDB" id="9806408at2"/>
<dbReference type="UniPathway" id="UPA00085"/>
<dbReference type="Proteomes" id="UP000002589">
    <property type="component" value="Chromosome"/>
</dbReference>
<dbReference type="GO" id="GO:0005737">
    <property type="term" value="C:cytoplasm"/>
    <property type="evidence" value="ECO:0007669"/>
    <property type="project" value="UniProtKB-SubCell"/>
</dbReference>
<dbReference type="GO" id="GO:0043811">
    <property type="term" value="F:phosphate:acyl-[acyl carrier protein] acyltransferase activity"/>
    <property type="evidence" value="ECO:0007669"/>
    <property type="project" value="UniProtKB-UniRule"/>
</dbReference>
<dbReference type="GO" id="GO:0006633">
    <property type="term" value="P:fatty acid biosynthetic process"/>
    <property type="evidence" value="ECO:0007669"/>
    <property type="project" value="UniProtKB-UniRule"/>
</dbReference>
<dbReference type="GO" id="GO:0008654">
    <property type="term" value="P:phospholipid biosynthetic process"/>
    <property type="evidence" value="ECO:0007669"/>
    <property type="project" value="UniProtKB-KW"/>
</dbReference>
<dbReference type="Gene3D" id="3.40.718.10">
    <property type="entry name" value="Isopropylmalate Dehydrogenase"/>
    <property type="match status" value="1"/>
</dbReference>
<dbReference type="HAMAP" id="MF_00019">
    <property type="entry name" value="PlsX"/>
    <property type="match status" value="1"/>
</dbReference>
<dbReference type="InterPro" id="IPR003664">
    <property type="entry name" value="FA_synthesis"/>
</dbReference>
<dbReference type="InterPro" id="IPR012281">
    <property type="entry name" value="Phospholipid_synth_PlsX-like"/>
</dbReference>
<dbReference type="NCBIfam" id="TIGR00182">
    <property type="entry name" value="plsX"/>
    <property type="match status" value="1"/>
</dbReference>
<dbReference type="PANTHER" id="PTHR30100">
    <property type="entry name" value="FATTY ACID/PHOSPHOLIPID SYNTHESIS PROTEIN PLSX"/>
    <property type="match status" value="1"/>
</dbReference>
<dbReference type="PANTHER" id="PTHR30100:SF1">
    <property type="entry name" value="PHOSPHATE ACYLTRANSFERASE"/>
    <property type="match status" value="1"/>
</dbReference>
<dbReference type="Pfam" id="PF02504">
    <property type="entry name" value="FA_synthesis"/>
    <property type="match status" value="1"/>
</dbReference>
<dbReference type="PIRSF" id="PIRSF002465">
    <property type="entry name" value="Phsphlp_syn_PlsX"/>
    <property type="match status" value="1"/>
</dbReference>
<dbReference type="SUPFAM" id="SSF53659">
    <property type="entry name" value="Isocitrate/Isopropylmalate dehydrogenase-like"/>
    <property type="match status" value="1"/>
</dbReference>
<keyword id="KW-0963">Cytoplasm</keyword>
<keyword id="KW-0444">Lipid biosynthesis</keyword>
<keyword id="KW-0443">Lipid metabolism</keyword>
<keyword id="KW-0594">Phospholipid biosynthesis</keyword>
<keyword id="KW-1208">Phospholipid metabolism</keyword>
<keyword id="KW-0808">Transferase</keyword>
<accession>A0KYB9</accession>
<name>PLSX_SHESA</name>
<comment type="function">
    <text evidence="1">Catalyzes the reversible formation of acyl-phosphate (acyl-PO(4)) from acyl-[acyl-carrier-protein] (acyl-ACP). This enzyme utilizes acyl-ACP as fatty acyl donor, but not acyl-CoA.</text>
</comment>
<comment type="catalytic activity">
    <reaction evidence="1">
        <text>a fatty acyl-[ACP] + phosphate = an acyl phosphate + holo-[ACP]</text>
        <dbReference type="Rhea" id="RHEA:42292"/>
        <dbReference type="Rhea" id="RHEA-COMP:9685"/>
        <dbReference type="Rhea" id="RHEA-COMP:14125"/>
        <dbReference type="ChEBI" id="CHEBI:43474"/>
        <dbReference type="ChEBI" id="CHEBI:59918"/>
        <dbReference type="ChEBI" id="CHEBI:64479"/>
        <dbReference type="ChEBI" id="CHEBI:138651"/>
        <dbReference type="EC" id="2.3.1.274"/>
    </reaction>
</comment>
<comment type="pathway">
    <text evidence="1">Lipid metabolism; phospholipid metabolism.</text>
</comment>
<comment type="subunit">
    <text evidence="1">Homodimer. Probably interacts with PlsY.</text>
</comment>
<comment type="subcellular location">
    <subcellularLocation>
        <location evidence="1">Cytoplasm</location>
    </subcellularLocation>
    <text evidence="1">Associated with the membrane possibly through PlsY.</text>
</comment>
<comment type="similarity">
    <text evidence="1">Belongs to the PlsX family.</text>
</comment>
<protein>
    <recommendedName>
        <fullName evidence="1">Phosphate acyltransferase</fullName>
        <ecNumber evidence="1">2.3.1.274</ecNumber>
    </recommendedName>
    <alternativeName>
        <fullName evidence="1">Acyl-ACP phosphotransacylase</fullName>
    </alternativeName>
    <alternativeName>
        <fullName evidence="1">Acyl-[acyl-carrier-protein]--phosphate acyltransferase</fullName>
    </alternativeName>
    <alternativeName>
        <fullName evidence="1">Phosphate-acyl-ACP acyltransferase</fullName>
    </alternativeName>
</protein>
<proteinExistence type="inferred from homology"/>
<organism>
    <name type="scientific">Shewanella sp. (strain ANA-3)</name>
    <dbReference type="NCBI Taxonomy" id="94122"/>
    <lineage>
        <taxon>Bacteria</taxon>
        <taxon>Pseudomonadati</taxon>
        <taxon>Pseudomonadota</taxon>
        <taxon>Gammaproteobacteria</taxon>
        <taxon>Alteromonadales</taxon>
        <taxon>Shewanellaceae</taxon>
        <taxon>Shewanella</taxon>
    </lineage>
</organism>
<sequence length="342" mass="37042">MTSLTLALDAMGGDHGPHVTVPAALRALKSHSSLKIILVGDKTEIDVYLRQAEQPLLSRIEVIHTDEVVSMSDRPVHALRTRKNSSMRLSIELVRDGRAAACVSAGNTGALMAMAKVLLKTLPGVDRPALVSCLPSVTQKPVYLLDLGANISCDSETLFQFAVMGSVLCEAVDKKSRPKVALLNVGTEEIKGNDQVQQAAQILQNTDQINYTGFIEGDEIYLGNVDVIVCDGFVGNITLKTSEGIAKLLVHQLKRGLTQGFFVRFLAKLIAPRIQAVLSQMNPDHYNGASLIGLRGIVVKSHGNADETAYLQAISLAVTEAQRRLPEMIKDRLESILLDINN</sequence>
<feature type="chain" id="PRO_1000001829" description="Phosphate acyltransferase">
    <location>
        <begin position="1"/>
        <end position="342"/>
    </location>
</feature>
<gene>
    <name evidence="1" type="primary">plsX</name>
    <name type="ordered locus">Shewana3_2561</name>
</gene>
<reference key="1">
    <citation type="submission" date="2006-09" db="EMBL/GenBank/DDBJ databases">
        <title>Complete sequence of chromosome 1 of Shewanella sp. ANA-3.</title>
        <authorList>
            <person name="Copeland A."/>
            <person name="Lucas S."/>
            <person name="Lapidus A."/>
            <person name="Barry K."/>
            <person name="Detter J.C."/>
            <person name="Glavina del Rio T."/>
            <person name="Hammon N."/>
            <person name="Israni S."/>
            <person name="Dalin E."/>
            <person name="Tice H."/>
            <person name="Pitluck S."/>
            <person name="Chertkov O."/>
            <person name="Brettin T."/>
            <person name="Bruce D."/>
            <person name="Han C."/>
            <person name="Tapia R."/>
            <person name="Gilna P."/>
            <person name="Schmutz J."/>
            <person name="Larimer F."/>
            <person name="Land M."/>
            <person name="Hauser L."/>
            <person name="Kyrpides N."/>
            <person name="Kim E."/>
            <person name="Newman D."/>
            <person name="Salticov C."/>
            <person name="Konstantinidis K."/>
            <person name="Klappenback J."/>
            <person name="Tiedje J."/>
            <person name="Richardson P."/>
        </authorList>
    </citation>
    <scope>NUCLEOTIDE SEQUENCE [LARGE SCALE GENOMIC DNA]</scope>
    <source>
        <strain>ANA-3</strain>
    </source>
</reference>
<evidence type="ECO:0000255" key="1">
    <source>
        <dbReference type="HAMAP-Rule" id="MF_00019"/>
    </source>
</evidence>